<sequence length="420" mass="46297">MFKFNEDEENLKCSFCGKDQDQVKKLVAGSGVYICNECIELCSEIVEEELAQNTSEAMTELPTPKEIMDHLNEYVIGQEKAKKSLAVAVYNHYKRIQQLGPKEDDVELQKSNIALIGPTGSGKTLLAQTLAKTLNVPFAIADATSLTEAGYVGDDVENILLRLIQAADFDIDKAEKGIIYVDEIDKIARKSENTSITRDVSGEGVQQALLKILEGTTASVPPQGGRKHPNQEMIQIDTTNILFILGGAFDGIEEVIKRRLGEKVIGFSSNEADKYDEQALLAQIRPEDLQAYGLIPEFIGRVPIVANLETLDVTALKNILTQPKNALVKQYTKMLELDDVDLEFTEEALSAISEKAIERKTGARGLRSIIEESLIDIMFDVPSNENVTKVVITAQTINEETEPELYDAEGNLINNSKTSA</sequence>
<comment type="function">
    <text evidence="1">ATP-dependent specificity component of the Clp protease. It directs the protease to specific substrates. Can perform chaperone functions in the absence of ClpP.</text>
</comment>
<comment type="subunit">
    <text evidence="1">Component of the ClpX-ClpP complex. Forms a hexameric ring that, in the presence of ATP, binds to fourteen ClpP subunits assembled into a disk-like structure with a central cavity, resembling the structure of eukaryotic proteasomes.</text>
</comment>
<comment type="similarity">
    <text evidence="1">Belongs to the ClpX chaperone family.</text>
</comment>
<feature type="chain" id="PRO_1000024670" description="ATP-dependent Clp protease ATP-binding subunit ClpX">
    <location>
        <begin position="1"/>
        <end position="420"/>
    </location>
</feature>
<feature type="domain" description="ClpX-type ZB" evidence="2">
    <location>
        <begin position="1"/>
        <end position="54"/>
    </location>
</feature>
<feature type="binding site" evidence="2">
    <location>
        <position position="13"/>
    </location>
    <ligand>
        <name>Zn(2+)</name>
        <dbReference type="ChEBI" id="CHEBI:29105"/>
    </ligand>
</feature>
<feature type="binding site" evidence="2">
    <location>
        <position position="16"/>
    </location>
    <ligand>
        <name>Zn(2+)</name>
        <dbReference type="ChEBI" id="CHEBI:29105"/>
    </ligand>
</feature>
<feature type="binding site" evidence="2">
    <location>
        <position position="35"/>
    </location>
    <ligand>
        <name>Zn(2+)</name>
        <dbReference type="ChEBI" id="CHEBI:29105"/>
    </ligand>
</feature>
<feature type="binding site" evidence="2">
    <location>
        <position position="38"/>
    </location>
    <ligand>
        <name>Zn(2+)</name>
        <dbReference type="ChEBI" id="CHEBI:29105"/>
    </ligand>
</feature>
<feature type="binding site" evidence="1">
    <location>
        <begin position="118"/>
        <end position="125"/>
    </location>
    <ligand>
        <name>ATP</name>
        <dbReference type="ChEBI" id="CHEBI:30616"/>
    </ligand>
</feature>
<accession>A7X396</accession>
<evidence type="ECO:0000255" key="1">
    <source>
        <dbReference type="HAMAP-Rule" id="MF_00175"/>
    </source>
</evidence>
<evidence type="ECO:0000255" key="2">
    <source>
        <dbReference type="PROSITE-ProRule" id="PRU01250"/>
    </source>
</evidence>
<protein>
    <recommendedName>
        <fullName evidence="1">ATP-dependent Clp protease ATP-binding subunit ClpX</fullName>
    </recommendedName>
</protein>
<organism>
    <name type="scientific">Staphylococcus aureus (strain Mu3 / ATCC 700698)</name>
    <dbReference type="NCBI Taxonomy" id="418127"/>
    <lineage>
        <taxon>Bacteria</taxon>
        <taxon>Bacillati</taxon>
        <taxon>Bacillota</taxon>
        <taxon>Bacilli</taxon>
        <taxon>Bacillales</taxon>
        <taxon>Staphylococcaceae</taxon>
        <taxon>Staphylococcus</taxon>
    </lineage>
</organism>
<dbReference type="EMBL" id="AP009324">
    <property type="protein sequence ID" value="BAF78544.1"/>
    <property type="molecule type" value="Genomic_DNA"/>
</dbReference>
<dbReference type="RefSeq" id="WP_000472302.1">
    <property type="nucleotide sequence ID" value="NZ_CTYB01000017.1"/>
</dbReference>
<dbReference type="SMR" id="A7X396"/>
<dbReference type="KEGG" id="saw:SAHV_1661"/>
<dbReference type="HOGENOM" id="CLU_014218_8_2_9"/>
<dbReference type="GO" id="GO:0009376">
    <property type="term" value="C:HslUV protease complex"/>
    <property type="evidence" value="ECO:0007669"/>
    <property type="project" value="TreeGrafter"/>
</dbReference>
<dbReference type="GO" id="GO:0005524">
    <property type="term" value="F:ATP binding"/>
    <property type="evidence" value="ECO:0007669"/>
    <property type="project" value="UniProtKB-UniRule"/>
</dbReference>
<dbReference type="GO" id="GO:0016887">
    <property type="term" value="F:ATP hydrolysis activity"/>
    <property type="evidence" value="ECO:0007669"/>
    <property type="project" value="InterPro"/>
</dbReference>
<dbReference type="GO" id="GO:0140662">
    <property type="term" value="F:ATP-dependent protein folding chaperone"/>
    <property type="evidence" value="ECO:0007669"/>
    <property type="project" value="InterPro"/>
</dbReference>
<dbReference type="GO" id="GO:0046983">
    <property type="term" value="F:protein dimerization activity"/>
    <property type="evidence" value="ECO:0007669"/>
    <property type="project" value="InterPro"/>
</dbReference>
<dbReference type="GO" id="GO:0051082">
    <property type="term" value="F:unfolded protein binding"/>
    <property type="evidence" value="ECO:0007669"/>
    <property type="project" value="UniProtKB-UniRule"/>
</dbReference>
<dbReference type="GO" id="GO:0008270">
    <property type="term" value="F:zinc ion binding"/>
    <property type="evidence" value="ECO:0007669"/>
    <property type="project" value="InterPro"/>
</dbReference>
<dbReference type="GO" id="GO:0051301">
    <property type="term" value="P:cell division"/>
    <property type="evidence" value="ECO:0007669"/>
    <property type="project" value="TreeGrafter"/>
</dbReference>
<dbReference type="GO" id="GO:0051603">
    <property type="term" value="P:proteolysis involved in protein catabolic process"/>
    <property type="evidence" value="ECO:0007669"/>
    <property type="project" value="TreeGrafter"/>
</dbReference>
<dbReference type="CDD" id="cd19497">
    <property type="entry name" value="RecA-like_ClpX"/>
    <property type="match status" value="1"/>
</dbReference>
<dbReference type="FunFam" id="1.10.8.60:FF:000002">
    <property type="entry name" value="ATP-dependent Clp protease ATP-binding subunit ClpX"/>
    <property type="match status" value="1"/>
</dbReference>
<dbReference type="FunFam" id="3.40.50.300:FF:000005">
    <property type="entry name" value="ATP-dependent Clp protease ATP-binding subunit ClpX"/>
    <property type="match status" value="1"/>
</dbReference>
<dbReference type="Gene3D" id="1.10.8.60">
    <property type="match status" value="1"/>
</dbReference>
<dbReference type="Gene3D" id="6.20.220.10">
    <property type="entry name" value="ClpX chaperone, C4-type zinc finger domain"/>
    <property type="match status" value="1"/>
</dbReference>
<dbReference type="Gene3D" id="3.40.50.300">
    <property type="entry name" value="P-loop containing nucleotide triphosphate hydrolases"/>
    <property type="match status" value="1"/>
</dbReference>
<dbReference type="HAMAP" id="MF_00175">
    <property type="entry name" value="ClpX"/>
    <property type="match status" value="1"/>
</dbReference>
<dbReference type="InterPro" id="IPR003593">
    <property type="entry name" value="AAA+_ATPase"/>
</dbReference>
<dbReference type="InterPro" id="IPR050052">
    <property type="entry name" value="ATP-dep_Clp_protease_ClpX"/>
</dbReference>
<dbReference type="InterPro" id="IPR003959">
    <property type="entry name" value="ATPase_AAA_core"/>
</dbReference>
<dbReference type="InterPro" id="IPR019489">
    <property type="entry name" value="Clp_ATPase_C"/>
</dbReference>
<dbReference type="InterPro" id="IPR004487">
    <property type="entry name" value="Clp_protease_ATP-bd_su_ClpX"/>
</dbReference>
<dbReference type="InterPro" id="IPR046425">
    <property type="entry name" value="ClpX_bact"/>
</dbReference>
<dbReference type="InterPro" id="IPR027417">
    <property type="entry name" value="P-loop_NTPase"/>
</dbReference>
<dbReference type="InterPro" id="IPR010603">
    <property type="entry name" value="Znf_CppX_C4"/>
</dbReference>
<dbReference type="InterPro" id="IPR038366">
    <property type="entry name" value="Znf_CppX_C4_sf"/>
</dbReference>
<dbReference type="NCBIfam" id="TIGR00382">
    <property type="entry name" value="clpX"/>
    <property type="match status" value="1"/>
</dbReference>
<dbReference type="NCBIfam" id="NF003745">
    <property type="entry name" value="PRK05342.1"/>
    <property type="match status" value="1"/>
</dbReference>
<dbReference type="PANTHER" id="PTHR48102:SF7">
    <property type="entry name" value="ATP-DEPENDENT CLP PROTEASE ATP-BINDING SUBUNIT CLPX-LIKE, MITOCHONDRIAL"/>
    <property type="match status" value="1"/>
</dbReference>
<dbReference type="PANTHER" id="PTHR48102">
    <property type="entry name" value="ATP-DEPENDENT CLP PROTEASE ATP-BINDING SUBUNIT CLPX-LIKE, MITOCHONDRIAL-RELATED"/>
    <property type="match status" value="1"/>
</dbReference>
<dbReference type="Pfam" id="PF07724">
    <property type="entry name" value="AAA_2"/>
    <property type="match status" value="1"/>
</dbReference>
<dbReference type="Pfam" id="PF10431">
    <property type="entry name" value="ClpB_D2-small"/>
    <property type="match status" value="1"/>
</dbReference>
<dbReference type="Pfam" id="PF06689">
    <property type="entry name" value="zf-C4_ClpX"/>
    <property type="match status" value="1"/>
</dbReference>
<dbReference type="SMART" id="SM00382">
    <property type="entry name" value="AAA"/>
    <property type="match status" value="1"/>
</dbReference>
<dbReference type="SMART" id="SM01086">
    <property type="entry name" value="ClpB_D2-small"/>
    <property type="match status" value="1"/>
</dbReference>
<dbReference type="SMART" id="SM00994">
    <property type="entry name" value="zf-C4_ClpX"/>
    <property type="match status" value="1"/>
</dbReference>
<dbReference type="SUPFAM" id="SSF57716">
    <property type="entry name" value="Glucocorticoid receptor-like (DNA-binding domain)"/>
    <property type="match status" value="1"/>
</dbReference>
<dbReference type="SUPFAM" id="SSF52540">
    <property type="entry name" value="P-loop containing nucleoside triphosphate hydrolases"/>
    <property type="match status" value="1"/>
</dbReference>
<dbReference type="PROSITE" id="PS51902">
    <property type="entry name" value="CLPX_ZB"/>
    <property type="match status" value="1"/>
</dbReference>
<name>CLPX_STAA1</name>
<reference key="1">
    <citation type="journal article" date="2008" name="Antimicrob. Agents Chemother.">
        <title>Mutated response regulator graR is responsible for phenotypic conversion of Staphylococcus aureus from heterogeneous vancomycin-intermediate resistance to vancomycin-intermediate resistance.</title>
        <authorList>
            <person name="Neoh H.-M."/>
            <person name="Cui L."/>
            <person name="Yuzawa H."/>
            <person name="Takeuchi F."/>
            <person name="Matsuo M."/>
            <person name="Hiramatsu K."/>
        </authorList>
    </citation>
    <scope>NUCLEOTIDE SEQUENCE [LARGE SCALE GENOMIC DNA]</scope>
    <source>
        <strain>Mu3 / ATCC 700698</strain>
    </source>
</reference>
<proteinExistence type="inferred from homology"/>
<keyword id="KW-0067">ATP-binding</keyword>
<keyword id="KW-0143">Chaperone</keyword>
<keyword id="KW-0479">Metal-binding</keyword>
<keyword id="KW-0547">Nucleotide-binding</keyword>
<keyword id="KW-0862">Zinc</keyword>
<gene>
    <name evidence="1" type="primary">clpX</name>
    <name type="ordered locus">SAHV_1661</name>
</gene>